<sequence>MTLSEESHLPKHVAIIMDGNNRFAKKNQMQKGDGHREGKNSLDPIVEHCCTRGVQALTVFAFSSENWNRPAFEVDLLMKLLEEAIHEQLPRMRKFNIALRFIGDRSKLSEHLTDLMTHAENETAHFTSMTLTIAISYGGMWDITDAAKQIAKDVSDGIVDIEQIDTHLFGRYVSLNQLPPVDLLIRTGGDYRLSNFLLWQAAYAELYFTETLWPEFSIDEFDHALAVFAGRERRFGKTSEQIQQDKIEN</sequence>
<proteinExistence type="inferred from homology"/>
<reference key="1">
    <citation type="journal article" date="2004" name="Nucleic Acids Res.">
        <title>Unique features revealed by the genome sequence of Acinetobacter sp. ADP1, a versatile and naturally transformation competent bacterium.</title>
        <authorList>
            <person name="Barbe V."/>
            <person name="Vallenet D."/>
            <person name="Fonknechten N."/>
            <person name="Kreimeyer A."/>
            <person name="Oztas S."/>
            <person name="Labarre L."/>
            <person name="Cruveiller S."/>
            <person name="Robert C."/>
            <person name="Duprat S."/>
            <person name="Wincker P."/>
            <person name="Ornston L.N."/>
            <person name="Weissenbach J."/>
            <person name="Marliere P."/>
            <person name="Cohen G.N."/>
            <person name="Medigue C."/>
        </authorList>
    </citation>
    <scope>NUCLEOTIDE SEQUENCE [LARGE SCALE GENOMIC DNA]</scope>
    <source>
        <strain>ATCC 33305 / BD413 / ADP1</strain>
    </source>
</reference>
<name>UPPS_ACIAD</name>
<evidence type="ECO:0000255" key="1">
    <source>
        <dbReference type="HAMAP-Rule" id="MF_01139"/>
    </source>
</evidence>
<keyword id="KW-0133">Cell shape</keyword>
<keyword id="KW-0961">Cell wall biogenesis/degradation</keyword>
<keyword id="KW-0460">Magnesium</keyword>
<keyword id="KW-0479">Metal-binding</keyword>
<keyword id="KW-0573">Peptidoglycan synthesis</keyword>
<keyword id="KW-0808">Transferase</keyword>
<gene>
    <name evidence="1" type="primary">uppS</name>
    <name type="ordered locus">ACIAD1374</name>
</gene>
<accession>Q6FCH1</accession>
<feature type="chain" id="PRO_0000123559" description="Ditrans,polycis-undecaprenyl-diphosphate synthase ((2E,6E)-farnesyl-diphosphate specific)">
    <location>
        <begin position="1"/>
        <end position="249"/>
    </location>
</feature>
<feature type="active site" evidence="1">
    <location>
        <position position="18"/>
    </location>
</feature>
<feature type="active site" description="Proton acceptor" evidence="1">
    <location>
        <position position="66"/>
    </location>
</feature>
<feature type="binding site" evidence="1">
    <location>
        <position position="18"/>
    </location>
    <ligand>
        <name>Mg(2+)</name>
        <dbReference type="ChEBI" id="CHEBI:18420"/>
    </ligand>
</feature>
<feature type="binding site" evidence="1">
    <location>
        <begin position="19"/>
        <end position="22"/>
    </location>
    <ligand>
        <name>substrate</name>
    </ligand>
</feature>
<feature type="binding site" evidence="1">
    <location>
        <position position="23"/>
    </location>
    <ligand>
        <name>substrate</name>
    </ligand>
</feature>
<feature type="binding site" evidence="1">
    <location>
        <position position="31"/>
    </location>
    <ligand>
        <name>substrate</name>
    </ligand>
</feature>
<feature type="binding site" evidence="1">
    <location>
        <position position="35"/>
    </location>
    <ligand>
        <name>substrate</name>
    </ligand>
</feature>
<feature type="binding site" evidence="1">
    <location>
        <begin position="63"/>
        <end position="65"/>
    </location>
    <ligand>
        <name>substrate</name>
    </ligand>
</feature>
<feature type="binding site" evidence="1">
    <location>
        <position position="67"/>
    </location>
    <ligand>
        <name>substrate</name>
    </ligand>
</feature>
<feature type="binding site" evidence="1">
    <location>
        <position position="69"/>
    </location>
    <ligand>
        <name>substrate</name>
    </ligand>
</feature>
<feature type="binding site" evidence="1">
    <location>
        <position position="186"/>
    </location>
    <ligand>
        <name>substrate</name>
    </ligand>
</feature>
<feature type="binding site" evidence="1">
    <location>
        <begin position="192"/>
        <end position="194"/>
    </location>
    <ligand>
        <name>substrate</name>
    </ligand>
</feature>
<feature type="binding site" evidence="1">
    <location>
        <position position="205"/>
    </location>
    <ligand>
        <name>Mg(2+)</name>
        <dbReference type="ChEBI" id="CHEBI:18420"/>
    </ligand>
</feature>
<comment type="function">
    <text evidence="1">Catalyzes the sequential condensation of isopentenyl diphosphate (IPP) with (2E,6E)-farnesyl diphosphate (E,E-FPP) to yield (2Z,6Z,10Z,14Z,18Z,22Z,26Z,30Z,34E,38E)-undecaprenyl diphosphate (di-trans,octa-cis-UPP). UPP is the precursor of glycosyl carrier lipid in the biosynthesis of bacterial cell wall polysaccharide components such as peptidoglycan and lipopolysaccharide.</text>
</comment>
<comment type="catalytic activity">
    <reaction evidence="1">
        <text>8 isopentenyl diphosphate + (2E,6E)-farnesyl diphosphate = di-trans,octa-cis-undecaprenyl diphosphate + 8 diphosphate</text>
        <dbReference type="Rhea" id="RHEA:27551"/>
        <dbReference type="ChEBI" id="CHEBI:33019"/>
        <dbReference type="ChEBI" id="CHEBI:58405"/>
        <dbReference type="ChEBI" id="CHEBI:128769"/>
        <dbReference type="ChEBI" id="CHEBI:175763"/>
        <dbReference type="EC" id="2.5.1.31"/>
    </reaction>
</comment>
<comment type="cofactor">
    <cofactor evidence="1">
        <name>Mg(2+)</name>
        <dbReference type="ChEBI" id="CHEBI:18420"/>
    </cofactor>
    <text evidence="1">Binds 2 magnesium ions per subunit.</text>
</comment>
<comment type="subunit">
    <text evidence="1">Homodimer.</text>
</comment>
<comment type="similarity">
    <text evidence="1">Belongs to the UPP synthase family.</text>
</comment>
<organism>
    <name type="scientific">Acinetobacter baylyi (strain ATCC 33305 / BD413 / ADP1)</name>
    <dbReference type="NCBI Taxonomy" id="62977"/>
    <lineage>
        <taxon>Bacteria</taxon>
        <taxon>Pseudomonadati</taxon>
        <taxon>Pseudomonadota</taxon>
        <taxon>Gammaproteobacteria</taxon>
        <taxon>Moraxellales</taxon>
        <taxon>Moraxellaceae</taxon>
        <taxon>Acinetobacter</taxon>
    </lineage>
</organism>
<dbReference type="EC" id="2.5.1.31" evidence="1"/>
<dbReference type="EMBL" id="CR543861">
    <property type="protein sequence ID" value="CAG68240.1"/>
    <property type="molecule type" value="Genomic_DNA"/>
</dbReference>
<dbReference type="RefSeq" id="WP_004925666.1">
    <property type="nucleotide sequence ID" value="NC_005966.1"/>
</dbReference>
<dbReference type="SMR" id="Q6FCH1"/>
<dbReference type="STRING" id="202950.GCA_001485005_01131"/>
<dbReference type="GeneID" id="45233789"/>
<dbReference type="KEGG" id="aci:ACIAD1374"/>
<dbReference type="eggNOG" id="COG0020">
    <property type="taxonomic scope" value="Bacteria"/>
</dbReference>
<dbReference type="HOGENOM" id="CLU_038505_1_1_6"/>
<dbReference type="OrthoDB" id="4191603at2"/>
<dbReference type="BioCyc" id="ASP62977:ACIAD_RS06335-MONOMER"/>
<dbReference type="Proteomes" id="UP000000430">
    <property type="component" value="Chromosome"/>
</dbReference>
<dbReference type="GO" id="GO:0005829">
    <property type="term" value="C:cytosol"/>
    <property type="evidence" value="ECO:0007669"/>
    <property type="project" value="TreeGrafter"/>
</dbReference>
<dbReference type="GO" id="GO:0008834">
    <property type="term" value="F:ditrans,polycis-undecaprenyl-diphosphate synthase [(2E,6E)-farnesyl-diphosphate specific] activity"/>
    <property type="evidence" value="ECO:0007669"/>
    <property type="project" value="UniProtKB-UniRule"/>
</dbReference>
<dbReference type="GO" id="GO:0000287">
    <property type="term" value="F:magnesium ion binding"/>
    <property type="evidence" value="ECO:0007669"/>
    <property type="project" value="UniProtKB-UniRule"/>
</dbReference>
<dbReference type="GO" id="GO:0071555">
    <property type="term" value="P:cell wall organization"/>
    <property type="evidence" value="ECO:0007669"/>
    <property type="project" value="UniProtKB-KW"/>
</dbReference>
<dbReference type="GO" id="GO:0009252">
    <property type="term" value="P:peptidoglycan biosynthetic process"/>
    <property type="evidence" value="ECO:0007669"/>
    <property type="project" value="UniProtKB-UniRule"/>
</dbReference>
<dbReference type="GO" id="GO:0016094">
    <property type="term" value="P:polyprenol biosynthetic process"/>
    <property type="evidence" value="ECO:0007669"/>
    <property type="project" value="TreeGrafter"/>
</dbReference>
<dbReference type="GO" id="GO:0008360">
    <property type="term" value="P:regulation of cell shape"/>
    <property type="evidence" value="ECO:0007669"/>
    <property type="project" value="UniProtKB-KW"/>
</dbReference>
<dbReference type="CDD" id="cd00475">
    <property type="entry name" value="Cis_IPPS"/>
    <property type="match status" value="1"/>
</dbReference>
<dbReference type="FunFam" id="3.40.1180.10:FF:000001">
    <property type="entry name" value="(2E,6E)-farnesyl-diphosphate-specific ditrans,polycis-undecaprenyl-diphosphate synthase"/>
    <property type="match status" value="1"/>
</dbReference>
<dbReference type="Gene3D" id="3.40.1180.10">
    <property type="entry name" value="Decaprenyl diphosphate synthase-like"/>
    <property type="match status" value="1"/>
</dbReference>
<dbReference type="HAMAP" id="MF_01139">
    <property type="entry name" value="ISPT"/>
    <property type="match status" value="1"/>
</dbReference>
<dbReference type="InterPro" id="IPR001441">
    <property type="entry name" value="UPP_synth-like"/>
</dbReference>
<dbReference type="InterPro" id="IPR018520">
    <property type="entry name" value="UPP_synth-like_CS"/>
</dbReference>
<dbReference type="InterPro" id="IPR036424">
    <property type="entry name" value="UPP_synth-like_sf"/>
</dbReference>
<dbReference type="NCBIfam" id="TIGR00055">
    <property type="entry name" value="uppS"/>
    <property type="match status" value="1"/>
</dbReference>
<dbReference type="PANTHER" id="PTHR10291:SF0">
    <property type="entry name" value="DEHYDRODOLICHYL DIPHOSPHATE SYNTHASE 2"/>
    <property type="match status" value="1"/>
</dbReference>
<dbReference type="PANTHER" id="PTHR10291">
    <property type="entry name" value="DEHYDRODOLICHYL DIPHOSPHATE SYNTHASE FAMILY MEMBER"/>
    <property type="match status" value="1"/>
</dbReference>
<dbReference type="Pfam" id="PF01255">
    <property type="entry name" value="Prenyltransf"/>
    <property type="match status" value="1"/>
</dbReference>
<dbReference type="SUPFAM" id="SSF64005">
    <property type="entry name" value="Undecaprenyl diphosphate synthase"/>
    <property type="match status" value="1"/>
</dbReference>
<dbReference type="PROSITE" id="PS01066">
    <property type="entry name" value="UPP_SYNTHASE"/>
    <property type="match status" value="1"/>
</dbReference>
<protein>
    <recommendedName>
        <fullName evidence="1">Ditrans,polycis-undecaprenyl-diphosphate synthase ((2E,6E)-farnesyl-diphosphate specific)</fullName>
        <ecNumber evidence="1">2.5.1.31</ecNumber>
    </recommendedName>
    <alternativeName>
        <fullName evidence="1">Ditrans,polycis-undecaprenylcistransferase</fullName>
    </alternativeName>
    <alternativeName>
        <fullName evidence="1">Undecaprenyl diphosphate synthase</fullName>
        <shortName evidence="1">UDS</shortName>
    </alternativeName>
    <alternativeName>
        <fullName evidence="1">Undecaprenyl pyrophosphate synthase</fullName>
        <shortName evidence="1">UPP synthase</shortName>
    </alternativeName>
</protein>